<organism>
    <name type="scientific">Candida glabrata (strain ATCC 2001 / BCRC 20586 / JCM 3761 / NBRC 0622 / NRRL Y-65 / CBS 138)</name>
    <name type="common">Yeast</name>
    <name type="synonym">Nakaseomyces glabratus</name>
    <dbReference type="NCBI Taxonomy" id="284593"/>
    <lineage>
        <taxon>Eukaryota</taxon>
        <taxon>Fungi</taxon>
        <taxon>Dikarya</taxon>
        <taxon>Ascomycota</taxon>
        <taxon>Saccharomycotina</taxon>
        <taxon>Saccharomycetes</taxon>
        <taxon>Saccharomycetales</taxon>
        <taxon>Saccharomycetaceae</taxon>
        <taxon>Nakaseomyces</taxon>
    </lineage>
</organism>
<keyword id="KW-0010">Activator</keyword>
<keyword id="KW-0012">Acyltransferase</keyword>
<keyword id="KW-0103">Bromodomain</keyword>
<keyword id="KW-0156">Chromatin regulator</keyword>
<keyword id="KW-0539">Nucleus</keyword>
<keyword id="KW-1185">Reference proteome</keyword>
<keyword id="KW-0804">Transcription</keyword>
<keyword id="KW-0805">Transcription regulation</keyword>
<keyword id="KW-0808">Transferase</keyword>
<comment type="function">
    <text evidence="2">Histone acetyltransferase that acetylates histone H2B to form H2BK11ac and H2BK16ac, histone H3 to form H3K14ac, with a lower preference histone H4 to form H4K8ac and H4K16ac, and contributes to H2A.Z acetylation. Acetylation of histones gives a specific tag for epigenetic transcription activation. In addition to histone acetyltransferase, can use different acyl-CoA substrates, such as (2E)-butenoyl-CoA (crotonyl-CoA) and is able to mediate histone crotonylation.</text>
</comment>
<comment type="catalytic activity">
    <reaction evidence="2">
        <text>L-lysyl-[protein] + acetyl-CoA = N(6)-acetyl-L-lysyl-[protein] + CoA + H(+)</text>
        <dbReference type="Rhea" id="RHEA:45948"/>
        <dbReference type="Rhea" id="RHEA-COMP:9752"/>
        <dbReference type="Rhea" id="RHEA-COMP:10731"/>
        <dbReference type="ChEBI" id="CHEBI:15378"/>
        <dbReference type="ChEBI" id="CHEBI:29969"/>
        <dbReference type="ChEBI" id="CHEBI:57287"/>
        <dbReference type="ChEBI" id="CHEBI:57288"/>
        <dbReference type="ChEBI" id="CHEBI:61930"/>
        <dbReference type="EC" id="2.3.1.48"/>
    </reaction>
</comment>
<comment type="catalytic activity">
    <reaction evidence="2">
        <text>(2E)-butenoyl-CoA + L-lysyl-[protein] = N(6)-(2E)-butenoyl-L-lysyl-[protein] + CoA + H(+)</text>
        <dbReference type="Rhea" id="RHEA:53908"/>
        <dbReference type="Rhea" id="RHEA-COMP:9752"/>
        <dbReference type="Rhea" id="RHEA-COMP:13707"/>
        <dbReference type="ChEBI" id="CHEBI:15378"/>
        <dbReference type="ChEBI" id="CHEBI:29969"/>
        <dbReference type="ChEBI" id="CHEBI:57287"/>
        <dbReference type="ChEBI" id="CHEBI:57332"/>
        <dbReference type="ChEBI" id="CHEBI:137954"/>
    </reaction>
</comment>
<comment type="subcellular location">
    <subcellularLocation>
        <location evidence="7">Nucleus</location>
    </subcellularLocation>
</comment>
<comment type="similarity">
    <text evidence="7">Belongs to the acetyltransferase family. GCN5 subfamily.</text>
</comment>
<gene>
    <name type="primary">GCN5</name>
    <name type="ordered locus">CAGL0F08283g</name>
</gene>
<accession>Q6FTW5</accession>
<proteinExistence type="inferred from homology"/>
<reference key="1">
    <citation type="journal article" date="2004" name="Nature">
        <title>Genome evolution in yeasts.</title>
        <authorList>
            <person name="Dujon B."/>
            <person name="Sherman D."/>
            <person name="Fischer G."/>
            <person name="Durrens P."/>
            <person name="Casaregola S."/>
            <person name="Lafontaine I."/>
            <person name="de Montigny J."/>
            <person name="Marck C."/>
            <person name="Neuveglise C."/>
            <person name="Talla E."/>
            <person name="Goffard N."/>
            <person name="Frangeul L."/>
            <person name="Aigle M."/>
            <person name="Anthouard V."/>
            <person name="Babour A."/>
            <person name="Barbe V."/>
            <person name="Barnay S."/>
            <person name="Blanchin S."/>
            <person name="Beckerich J.-M."/>
            <person name="Beyne E."/>
            <person name="Bleykasten C."/>
            <person name="Boisrame A."/>
            <person name="Boyer J."/>
            <person name="Cattolico L."/>
            <person name="Confanioleri F."/>
            <person name="de Daruvar A."/>
            <person name="Despons L."/>
            <person name="Fabre E."/>
            <person name="Fairhead C."/>
            <person name="Ferry-Dumazet H."/>
            <person name="Groppi A."/>
            <person name="Hantraye F."/>
            <person name="Hennequin C."/>
            <person name="Jauniaux N."/>
            <person name="Joyet P."/>
            <person name="Kachouri R."/>
            <person name="Kerrest A."/>
            <person name="Koszul R."/>
            <person name="Lemaire M."/>
            <person name="Lesur I."/>
            <person name="Ma L."/>
            <person name="Muller H."/>
            <person name="Nicaud J.-M."/>
            <person name="Nikolski M."/>
            <person name="Oztas S."/>
            <person name="Ozier-Kalogeropoulos O."/>
            <person name="Pellenz S."/>
            <person name="Potier S."/>
            <person name="Richard G.-F."/>
            <person name="Straub M.-L."/>
            <person name="Suleau A."/>
            <person name="Swennen D."/>
            <person name="Tekaia F."/>
            <person name="Wesolowski-Louvel M."/>
            <person name="Westhof E."/>
            <person name="Wirth B."/>
            <person name="Zeniou-Meyer M."/>
            <person name="Zivanovic Y."/>
            <person name="Bolotin-Fukuhara M."/>
            <person name="Thierry A."/>
            <person name="Bouchier C."/>
            <person name="Caudron B."/>
            <person name="Scarpelli C."/>
            <person name="Gaillardin C."/>
            <person name="Weissenbach J."/>
            <person name="Wincker P."/>
            <person name="Souciet J.-L."/>
        </authorList>
    </citation>
    <scope>NUCLEOTIDE SEQUENCE [LARGE SCALE GENOMIC DNA]</scope>
    <source>
        <strain>ATCC 2001 / BCRC 20586 / JCM 3761 / NBRC 0622 / NRRL Y-65 / CBS 138</strain>
    </source>
</reference>
<evidence type="ECO:0000250" key="1"/>
<evidence type="ECO:0000250" key="2">
    <source>
        <dbReference type="UniProtKB" id="Q03330"/>
    </source>
</evidence>
<evidence type="ECO:0000250" key="3">
    <source>
        <dbReference type="UniProtKB" id="Q92830"/>
    </source>
</evidence>
<evidence type="ECO:0000255" key="4">
    <source>
        <dbReference type="PROSITE-ProRule" id="PRU00035"/>
    </source>
</evidence>
<evidence type="ECO:0000255" key="5">
    <source>
        <dbReference type="PROSITE-ProRule" id="PRU00532"/>
    </source>
</evidence>
<evidence type="ECO:0000256" key="6">
    <source>
        <dbReference type="SAM" id="MobiDB-lite"/>
    </source>
</evidence>
<evidence type="ECO:0000305" key="7"/>
<dbReference type="EC" id="2.3.1.48" evidence="2"/>
<dbReference type="EC" id="2.3.1.-" evidence="2"/>
<dbReference type="EMBL" id="CR380952">
    <property type="protein sequence ID" value="CAG59253.1"/>
    <property type="molecule type" value="Genomic_DNA"/>
</dbReference>
<dbReference type="RefSeq" id="XP_446329.1">
    <property type="nucleotide sequence ID" value="XM_446329.1"/>
</dbReference>
<dbReference type="SMR" id="Q6FTW5"/>
<dbReference type="FunCoup" id="Q6FTW5">
    <property type="interactions" value="569"/>
</dbReference>
<dbReference type="STRING" id="284593.Q6FTW5"/>
<dbReference type="EnsemblFungi" id="CAGL0F08283g-T">
    <property type="protein sequence ID" value="CAGL0F08283g-T-p1"/>
    <property type="gene ID" value="CAGL0F08283g"/>
</dbReference>
<dbReference type="GeneID" id="2887572"/>
<dbReference type="KEGG" id="cgr:2887572"/>
<dbReference type="CGD" id="CAL0131206">
    <property type="gene designation" value="GCN5"/>
</dbReference>
<dbReference type="VEuPathDB" id="FungiDB:CAGL0F08283g"/>
<dbReference type="eggNOG" id="KOG1472">
    <property type="taxonomic scope" value="Eukaryota"/>
</dbReference>
<dbReference type="HOGENOM" id="CLU_015741_2_0_1"/>
<dbReference type="InParanoid" id="Q6FTW5"/>
<dbReference type="OMA" id="MKLEARE"/>
<dbReference type="PHI-base" id="PHI:123185"/>
<dbReference type="Proteomes" id="UP000002428">
    <property type="component" value="Chromosome F"/>
</dbReference>
<dbReference type="GO" id="GO:0140671">
    <property type="term" value="C:ADA complex"/>
    <property type="evidence" value="ECO:0000315"/>
    <property type="project" value="CGD"/>
</dbReference>
<dbReference type="GO" id="GO:0000775">
    <property type="term" value="C:chromosome, centromeric region"/>
    <property type="evidence" value="ECO:0007669"/>
    <property type="project" value="EnsemblFungi"/>
</dbReference>
<dbReference type="GO" id="GO:0005829">
    <property type="term" value="C:cytosol"/>
    <property type="evidence" value="ECO:0007669"/>
    <property type="project" value="EnsemblFungi"/>
</dbReference>
<dbReference type="GO" id="GO:0005634">
    <property type="term" value="C:nucleus"/>
    <property type="evidence" value="ECO:0007669"/>
    <property type="project" value="UniProtKB-SubCell"/>
</dbReference>
<dbReference type="GO" id="GO:0000124">
    <property type="term" value="C:SAGA complex"/>
    <property type="evidence" value="ECO:0007669"/>
    <property type="project" value="EnsemblFungi"/>
</dbReference>
<dbReference type="GO" id="GO:0046695">
    <property type="term" value="C:SLIK (SAGA-like) complex"/>
    <property type="evidence" value="ECO:0007669"/>
    <property type="project" value="EnsemblFungi"/>
</dbReference>
<dbReference type="GO" id="GO:0140068">
    <property type="term" value="F:histone crotonyltransferase activity"/>
    <property type="evidence" value="ECO:0007669"/>
    <property type="project" value="EnsemblFungi"/>
</dbReference>
<dbReference type="GO" id="GO:0036408">
    <property type="term" value="F:histone H3K14 acetyltransferase activity"/>
    <property type="evidence" value="ECO:0007669"/>
    <property type="project" value="EnsemblFungi"/>
</dbReference>
<dbReference type="GO" id="GO:0043993">
    <property type="term" value="F:histone H3K18 acetyltransferase activity"/>
    <property type="evidence" value="ECO:0007669"/>
    <property type="project" value="EnsemblFungi"/>
</dbReference>
<dbReference type="GO" id="GO:0043992">
    <property type="term" value="F:histone H3K9 acetyltransferase activity"/>
    <property type="evidence" value="ECO:0007669"/>
    <property type="project" value="EnsemblFungi"/>
</dbReference>
<dbReference type="GO" id="GO:0140566">
    <property type="term" value="F:histone reader activity"/>
    <property type="evidence" value="ECO:0007669"/>
    <property type="project" value="EnsemblFungi"/>
</dbReference>
<dbReference type="GO" id="GO:0070577">
    <property type="term" value="F:lysine-acetylated histone binding"/>
    <property type="evidence" value="ECO:0007669"/>
    <property type="project" value="EnsemblFungi"/>
</dbReference>
<dbReference type="GO" id="GO:0003712">
    <property type="term" value="F:transcription coregulator activity"/>
    <property type="evidence" value="ECO:0007669"/>
    <property type="project" value="EnsemblFungi"/>
</dbReference>
<dbReference type="GO" id="GO:0010515">
    <property type="term" value="P:negative regulation of induction of conjugation with cellular fusion"/>
    <property type="evidence" value="ECO:0007669"/>
    <property type="project" value="EnsemblFungi"/>
</dbReference>
<dbReference type="GO" id="GO:0032968">
    <property type="term" value="P:positive regulation of transcription elongation by RNA polymerase II"/>
    <property type="evidence" value="ECO:0007669"/>
    <property type="project" value="EnsemblFungi"/>
</dbReference>
<dbReference type="GO" id="GO:0045815">
    <property type="term" value="P:transcription initiation-coupled chromatin remodeling"/>
    <property type="evidence" value="ECO:0000315"/>
    <property type="project" value="CGD"/>
</dbReference>
<dbReference type="CDD" id="cd05509">
    <property type="entry name" value="Bromo_gcn5_like"/>
    <property type="match status" value="1"/>
</dbReference>
<dbReference type="CDD" id="cd04301">
    <property type="entry name" value="NAT_SF"/>
    <property type="match status" value="1"/>
</dbReference>
<dbReference type="FunFam" id="1.20.920.10:FF:000046">
    <property type="entry name" value="Histone acetyltransferase GCN5"/>
    <property type="match status" value="1"/>
</dbReference>
<dbReference type="FunFam" id="3.40.630.30:FF:000004">
    <property type="entry name" value="Histone acetyltransferase KAT2A"/>
    <property type="match status" value="1"/>
</dbReference>
<dbReference type="Gene3D" id="3.40.630.30">
    <property type="match status" value="1"/>
</dbReference>
<dbReference type="Gene3D" id="1.20.920.10">
    <property type="entry name" value="Bromodomain-like"/>
    <property type="match status" value="1"/>
</dbReference>
<dbReference type="InterPro" id="IPR016181">
    <property type="entry name" value="Acyl_CoA_acyltransferase"/>
</dbReference>
<dbReference type="InterPro" id="IPR001487">
    <property type="entry name" value="Bromodomain"/>
</dbReference>
<dbReference type="InterPro" id="IPR036427">
    <property type="entry name" value="Bromodomain-like_sf"/>
</dbReference>
<dbReference type="InterPro" id="IPR018359">
    <property type="entry name" value="Bromodomain_CS"/>
</dbReference>
<dbReference type="InterPro" id="IPR037800">
    <property type="entry name" value="GCN5"/>
</dbReference>
<dbReference type="InterPro" id="IPR000182">
    <property type="entry name" value="GNAT_dom"/>
</dbReference>
<dbReference type="PANTHER" id="PTHR45750">
    <property type="entry name" value="GH11602P"/>
    <property type="match status" value="1"/>
</dbReference>
<dbReference type="PANTHER" id="PTHR45750:SF3">
    <property type="entry name" value="HISTONE ACETYLTRANSFERASE"/>
    <property type="match status" value="1"/>
</dbReference>
<dbReference type="Pfam" id="PF00583">
    <property type="entry name" value="Acetyltransf_1"/>
    <property type="match status" value="1"/>
</dbReference>
<dbReference type="Pfam" id="PF00439">
    <property type="entry name" value="Bromodomain"/>
    <property type="match status" value="1"/>
</dbReference>
<dbReference type="PRINTS" id="PR00503">
    <property type="entry name" value="BROMODOMAIN"/>
</dbReference>
<dbReference type="SMART" id="SM00297">
    <property type="entry name" value="BROMO"/>
    <property type="match status" value="1"/>
</dbReference>
<dbReference type="SUPFAM" id="SSF55729">
    <property type="entry name" value="Acyl-CoA N-acyltransferases (Nat)"/>
    <property type="match status" value="1"/>
</dbReference>
<dbReference type="SUPFAM" id="SSF47370">
    <property type="entry name" value="Bromodomain"/>
    <property type="match status" value="1"/>
</dbReference>
<dbReference type="PROSITE" id="PS00633">
    <property type="entry name" value="BROMODOMAIN_1"/>
    <property type="match status" value="1"/>
</dbReference>
<dbReference type="PROSITE" id="PS50014">
    <property type="entry name" value="BROMODOMAIN_2"/>
    <property type="match status" value="1"/>
</dbReference>
<dbReference type="PROSITE" id="PS51186">
    <property type="entry name" value="GNAT"/>
    <property type="match status" value="1"/>
</dbReference>
<name>GCN5_CANGA</name>
<feature type="chain" id="PRO_0000211196" description="Histone acetyltransferase GCN5">
    <location>
        <begin position="1"/>
        <end position="546"/>
    </location>
</feature>
<feature type="domain" description="N-acetyltransferase" evidence="5">
    <location>
        <begin position="207"/>
        <end position="362"/>
    </location>
</feature>
<feature type="domain" description="Bromo" evidence="4">
    <location>
        <begin position="434"/>
        <end position="538"/>
    </location>
</feature>
<feature type="region of interest" description="Disordered" evidence="6">
    <location>
        <begin position="1"/>
        <end position="176"/>
    </location>
</feature>
<feature type="compositionally biased region" description="Basic and acidic residues" evidence="6">
    <location>
        <begin position="9"/>
        <end position="44"/>
    </location>
</feature>
<feature type="compositionally biased region" description="Basic and acidic residues" evidence="6">
    <location>
        <begin position="51"/>
        <end position="62"/>
    </location>
</feature>
<feature type="compositionally biased region" description="Basic and acidic residues" evidence="6">
    <location>
        <begin position="81"/>
        <end position="107"/>
    </location>
</feature>
<feature type="compositionally biased region" description="Acidic residues" evidence="6">
    <location>
        <begin position="108"/>
        <end position="119"/>
    </location>
</feature>
<feature type="compositionally biased region" description="Basic and acidic residues" evidence="6">
    <location>
        <begin position="128"/>
        <end position="149"/>
    </location>
</feature>
<feature type="compositionally biased region" description="Acidic residues" evidence="6">
    <location>
        <begin position="150"/>
        <end position="175"/>
    </location>
</feature>
<feature type="active site" description="Proton donor/acceptor" evidence="3">
    <location>
        <position position="280"/>
    </location>
</feature>
<feature type="binding site" evidence="3">
    <location>
        <begin position="284"/>
        <end position="286"/>
    </location>
    <ligand>
        <name>acetyl-CoA</name>
        <dbReference type="ChEBI" id="CHEBI:57288"/>
    </ligand>
</feature>
<feature type="binding site" evidence="3">
    <location>
        <begin position="291"/>
        <end position="297"/>
    </location>
    <ligand>
        <name>acetyl-CoA</name>
        <dbReference type="ChEBI" id="CHEBI:57288"/>
    </ligand>
</feature>
<feature type="binding site" evidence="3">
    <location>
        <begin position="323"/>
        <end position="326"/>
    </location>
    <ligand>
        <name>acetyl-CoA</name>
        <dbReference type="ChEBI" id="CHEBI:57288"/>
    </ligand>
</feature>
<feature type="site" description="Important for catalytic activity" evidence="1">
    <location>
        <position position="280"/>
    </location>
</feature>
<protein>
    <recommendedName>
        <fullName evidence="7">Histone acetyltransferase GCN5</fullName>
        <ecNumber evidence="2">2.3.1.48</ecNumber>
    </recommendedName>
    <alternativeName>
        <fullName evidence="7">Histone crotonyltransferase GCN5</fullName>
        <ecNumber evidence="2">2.3.1.-</ecNumber>
    </alternativeName>
</protein>
<sequence length="546" mass="63512">MVTRRRLHHPEVEQVSKRQKVDKAESKNKKHADVAAERGEQSTEDHEDESQDKKDKKVVGDNRDEDEEVSPNGQEAAEDNDDRKDKDAKEKDTETNDEGTEKSHTDVNDDDDDVDESKEEDAAAAVDITKEKKDEQESDNKTEEKKVQENEEEEEEDENKNDEDVEELGSTEPVDDEKKGLVKFEFDGVEYKFKERASVIEENEGKIEFRVVSNDNTRENMMVLTGLKNIFQKQLPKMPKEYIARLVYDRSHLSMAVIRKPLTVVGGITYKPFNKRQFAEIVFCAISSTEQVRGYGAHLMNHLKDYVRNTSDIRYFLTYADNYAIGYFKKQGFTKDITLDKKVWMGYIKDYEGGTLMQCSMLPRIRYLDAAKILLLQEAALRRKIRTISKSHVVHPGLECFNDIENIKPIDPMSIPGLKEAGWTPEMDELAQRPKRGPHYAAIQNILVELQNHAAAWPFLRPVNKEEVPDYYEFIKEPMDLSTMELKLENNKYEKMEEFIYDARLVCNNCRLYNGENTSYYKYANRLEKFFNNKVKEIPEYSHLID</sequence>